<gene>
    <name type="ordered locus">PCC_0364</name>
</gene>
<evidence type="ECO:0000255" key="1">
    <source>
        <dbReference type="HAMAP-Rule" id="MF_03147"/>
    </source>
</evidence>
<reference key="1">
    <citation type="journal article" date="2008" name="Curr. Biol.">
        <title>Chromatophore genome sequence of Paulinella sheds light on acquisition of photosynthesis by eukaryotes.</title>
        <authorList>
            <person name="Nowack E.C.M."/>
            <person name="Melkonian M."/>
            <person name="Gloeckner G."/>
        </authorList>
    </citation>
    <scope>NUCLEOTIDE SEQUENCE [LARGE SCALE GENOMIC DNA]</scope>
</reference>
<geneLocation type="organellar chromatophore"/>
<proteinExistence type="inferred from homology"/>
<keyword id="KW-0067">ATP-binding</keyword>
<keyword id="KW-0436">Ligase</keyword>
<keyword id="KW-0547">Nucleotide-binding</keyword>
<keyword id="KW-0994">Organellar chromatophore</keyword>
<keyword id="KW-0934">Plastid</keyword>
<keyword id="KW-0648">Protein biosynthesis</keyword>
<dbReference type="EC" id="6.3.5.-" evidence="1"/>
<dbReference type="EMBL" id="CP000815">
    <property type="protein sequence ID" value="ACB42805.1"/>
    <property type="molecule type" value="Genomic_DNA"/>
</dbReference>
<dbReference type="RefSeq" id="YP_002049015.1">
    <property type="nucleotide sequence ID" value="NC_011087.1"/>
</dbReference>
<dbReference type="SMR" id="B1X4D6"/>
<dbReference type="GeneID" id="6481741"/>
<dbReference type="GO" id="GO:0030956">
    <property type="term" value="C:glutamyl-tRNA(Gln) amidotransferase complex"/>
    <property type="evidence" value="ECO:0007669"/>
    <property type="project" value="UniProtKB-UniRule"/>
</dbReference>
<dbReference type="GO" id="GO:0005739">
    <property type="term" value="C:mitochondrion"/>
    <property type="evidence" value="ECO:0007669"/>
    <property type="project" value="GOC"/>
</dbReference>
<dbReference type="GO" id="GO:0070111">
    <property type="term" value="C:organellar chromatophore"/>
    <property type="evidence" value="ECO:0007669"/>
    <property type="project" value="UniProtKB-SubCell"/>
</dbReference>
<dbReference type="GO" id="GO:0009536">
    <property type="term" value="C:plastid"/>
    <property type="evidence" value="ECO:0007669"/>
    <property type="project" value="UniProtKB-KW"/>
</dbReference>
<dbReference type="GO" id="GO:0005524">
    <property type="term" value="F:ATP binding"/>
    <property type="evidence" value="ECO:0007669"/>
    <property type="project" value="UniProtKB-KW"/>
</dbReference>
<dbReference type="GO" id="GO:0050567">
    <property type="term" value="F:glutaminyl-tRNA synthase (glutamine-hydrolyzing) activity"/>
    <property type="evidence" value="ECO:0007669"/>
    <property type="project" value="UniProtKB-UniRule"/>
</dbReference>
<dbReference type="GO" id="GO:0070681">
    <property type="term" value="P:glutaminyl-tRNAGln biosynthesis via transamidation"/>
    <property type="evidence" value="ECO:0007669"/>
    <property type="project" value="UniProtKB-UniRule"/>
</dbReference>
<dbReference type="GO" id="GO:0032543">
    <property type="term" value="P:mitochondrial translation"/>
    <property type="evidence" value="ECO:0007669"/>
    <property type="project" value="UniProtKB-UniRule"/>
</dbReference>
<dbReference type="FunFam" id="1.10.10.410:FF:000001">
    <property type="entry name" value="Aspartyl/glutamyl-tRNA(Asn/Gln) amidotransferase subunit B"/>
    <property type="match status" value="1"/>
</dbReference>
<dbReference type="FunFam" id="1.10.150.380:FF:000001">
    <property type="entry name" value="Aspartyl/glutamyl-tRNA(Asn/Gln) amidotransferase subunit B"/>
    <property type="match status" value="1"/>
</dbReference>
<dbReference type="Gene3D" id="1.10.10.410">
    <property type="match status" value="1"/>
</dbReference>
<dbReference type="Gene3D" id="1.10.150.380">
    <property type="entry name" value="GatB domain, N-terminal subdomain"/>
    <property type="match status" value="1"/>
</dbReference>
<dbReference type="HAMAP" id="MF_00121">
    <property type="entry name" value="GatB"/>
    <property type="match status" value="1"/>
</dbReference>
<dbReference type="InterPro" id="IPR017959">
    <property type="entry name" value="Asn/Gln-tRNA_amidoTrfase_suB/E"/>
</dbReference>
<dbReference type="InterPro" id="IPR006075">
    <property type="entry name" value="Asn/Gln-tRNA_Trfase_suB/E_cat"/>
</dbReference>
<dbReference type="InterPro" id="IPR018027">
    <property type="entry name" value="Asn/Gln_amidotransferase"/>
</dbReference>
<dbReference type="InterPro" id="IPR003789">
    <property type="entry name" value="Asn/Gln_tRNA_amidoTrase-B-like"/>
</dbReference>
<dbReference type="InterPro" id="IPR004413">
    <property type="entry name" value="GatB"/>
</dbReference>
<dbReference type="InterPro" id="IPR042114">
    <property type="entry name" value="GatB_C_1"/>
</dbReference>
<dbReference type="InterPro" id="IPR023168">
    <property type="entry name" value="GatB_Yqey_C_2"/>
</dbReference>
<dbReference type="InterPro" id="IPR017958">
    <property type="entry name" value="Gln-tRNA_amidoTrfase_suB_CS"/>
</dbReference>
<dbReference type="InterPro" id="IPR014746">
    <property type="entry name" value="Gln_synth/guanido_kin_cat_dom"/>
</dbReference>
<dbReference type="NCBIfam" id="TIGR00133">
    <property type="entry name" value="gatB"/>
    <property type="match status" value="1"/>
</dbReference>
<dbReference type="NCBIfam" id="NF004012">
    <property type="entry name" value="PRK05477.1-2"/>
    <property type="match status" value="1"/>
</dbReference>
<dbReference type="NCBIfam" id="NF004014">
    <property type="entry name" value="PRK05477.1-4"/>
    <property type="match status" value="1"/>
</dbReference>
<dbReference type="PANTHER" id="PTHR11659">
    <property type="entry name" value="GLUTAMYL-TRNA GLN AMIDOTRANSFERASE SUBUNIT B MITOCHONDRIAL AND PROKARYOTIC PET112-RELATED"/>
    <property type="match status" value="1"/>
</dbReference>
<dbReference type="PANTHER" id="PTHR11659:SF0">
    <property type="entry name" value="GLUTAMYL-TRNA(GLN) AMIDOTRANSFERASE SUBUNIT B, MITOCHONDRIAL"/>
    <property type="match status" value="1"/>
</dbReference>
<dbReference type="Pfam" id="PF02934">
    <property type="entry name" value="GatB_N"/>
    <property type="match status" value="1"/>
</dbReference>
<dbReference type="Pfam" id="PF02637">
    <property type="entry name" value="GatB_Yqey"/>
    <property type="match status" value="1"/>
</dbReference>
<dbReference type="SMART" id="SM00845">
    <property type="entry name" value="GatB_Yqey"/>
    <property type="match status" value="1"/>
</dbReference>
<dbReference type="SUPFAM" id="SSF89095">
    <property type="entry name" value="GatB/YqeY motif"/>
    <property type="match status" value="1"/>
</dbReference>
<dbReference type="SUPFAM" id="SSF55931">
    <property type="entry name" value="Glutamine synthetase/guanido kinase"/>
    <property type="match status" value="1"/>
</dbReference>
<dbReference type="PROSITE" id="PS01234">
    <property type="entry name" value="GATB"/>
    <property type="match status" value="1"/>
</dbReference>
<comment type="function">
    <text evidence="1">Allows the formation of correctly charged Gln-tRNA(Gln) through the transamidation of misacylated Glu-tRNA(Gln). The reaction takes place in the presence of glutamine and ATP through an activated gamma-phospho-Glu-tRNA(Gln).</text>
</comment>
<comment type="catalytic activity">
    <reaction evidence="1">
        <text>L-glutamyl-tRNA(Gln) + L-glutamine + ATP + H2O = L-glutaminyl-tRNA(Gln) + L-glutamate + ADP + phosphate + H(+)</text>
        <dbReference type="Rhea" id="RHEA:17521"/>
        <dbReference type="Rhea" id="RHEA-COMP:9681"/>
        <dbReference type="Rhea" id="RHEA-COMP:9684"/>
        <dbReference type="ChEBI" id="CHEBI:15377"/>
        <dbReference type="ChEBI" id="CHEBI:15378"/>
        <dbReference type="ChEBI" id="CHEBI:29985"/>
        <dbReference type="ChEBI" id="CHEBI:30616"/>
        <dbReference type="ChEBI" id="CHEBI:43474"/>
        <dbReference type="ChEBI" id="CHEBI:58359"/>
        <dbReference type="ChEBI" id="CHEBI:78520"/>
        <dbReference type="ChEBI" id="CHEBI:78521"/>
        <dbReference type="ChEBI" id="CHEBI:456216"/>
    </reaction>
</comment>
<comment type="subunit">
    <text evidence="1">Subunit of the heterotrimeric GatCAB amidotransferase (AdT) complex, composed of A, B and C subunits.</text>
</comment>
<comment type="subcellular location">
    <subcellularLocation>
        <location>Plastid</location>
        <location>Organellar chromatophore</location>
    </subcellularLocation>
</comment>
<comment type="similarity">
    <text evidence="1">Belongs to the GatB/GatE family. GatB subfamily.</text>
</comment>
<name>GATB_PAUCH</name>
<accession>B1X4D6</accession>
<organism>
    <name type="scientific">Paulinella chromatophora</name>
    <dbReference type="NCBI Taxonomy" id="39717"/>
    <lineage>
        <taxon>Eukaryota</taxon>
        <taxon>Sar</taxon>
        <taxon>Rhizaria</taxon>
        <taxon>Cercozoa</taxon>
        <taxon>Imbricatea</taxon>
        <taxon>Silicofilosea</taxon>
        <taxon>Euglyphida</taxon>
        <taxon>Paulinellidae</taxon>
        <taxon>Paulinella</taxon>
    </lineage>
</organism>
<sequence>MVSIAGQIGWEAVIGIETHVQLGTASKIFTQASTNFGDDPNTNINPVVCGLPGTLPVLNQKVLEYAVKAAMALNLKVSEHSKFDRKQYFYPDLPKNYQISQYDEPIAEDGWIEVEIAEKEKQTYTKRIGIERLHMEEDAGKLVHIGSDRLTGSNHSLIDYNRAGIALAEIVSKPDLRTGREAAEYASEIRRIMRYLGVSDGNMQEGSLRCDVNISVRKGKNAPFGIKIEIKNMNSFSAIQKACEYEISRQIKAINNGERIIQETRLWDENKQLTTSMRSKEVASDYRYFPDPDLGPIEIELDRREAWKHELPELPAIKRHRYVEELGLSIYDARIITDELPMAEYFESAITAGAEAKALANWLMGDISAYLNTNKTTIGEIKLRPSQLAELIILISNGEISGKIAKEILPELIEKGLSPSALIDDKGLAMISDNNQIRTIIVELLSLYPEEVKAFRNGKIKLQGFFVGQLMKKTSGKADPKISNKILLEILNASEN</sequence>
<protein>
    <recommendedName>
        <fullName evidence="1">Glutamyl-tRNA(Gln) amidotransferase subunit B, organellar chromatophore</fullName>
        <shortName evidence="1">Glu-AdT subunit B</shortName>
        <ecNumber evidence="1">6.3.5.-</ecNumber>
    </recommendedName>
</protein>
<feature type="chain" id="PRO_0000413236" description="Glutamyl-tRNA(Gln) amidotransferase subunit B, organellar chromatophore">
    <location>
        <begin position="1"/>
        <end position="496"/>
    </location>
</feature>